<sequence>MEDFVRQCFNPMIVELAEKAMKEYGEDLKIETNKFAAICTHLEVCFMYSDFHFINEQGESIIVELDDPNALLKHRFEIIEGRDRTMAWTVVNSICNTTGAEKPKFLPDLYDYKENRFIEIGVTRREVHIYYLEKANKIKSEKTHIHIFSFTGEEMATKADYTLDEESRARIKTRLFTIRQEMASRGLWDSFVSPREAKKQLKKDLKSQEQCAGSLTKVSRRTSPALRILEPMWMDSNRTATLRASFLKCPKK</sequence>
<keyword id="KW-1132">Decay of host mRNAs by virus</keyword>
<keyword id="KW-1262">Eukaryotic host gene expression shutoff by virus</keyword>
<keyword id="KW-1035">Host cytoplasm</keyword>
<keyword id="KW-1190">Host gene expression shutoff by virus</keyword>
<keyword id="KW-1192">Host mRNA suppression by virus</keyword>
<keyword id="KW-1048">Host nucleus</keyword>
<keyword id="KW-0945">Host-virus interaction</keyword>
<keyword id="KW-0688">Ribosomal frameshifting</keyword>
<gene>
    <name type="primary">PA</name>
</gene>
<proteinExistence type="inferred from homology"/>
<organismHost>
    <name type="scientific">Aves</name>
    <dbReference type="NCBI Taxonomy" id="8782"/>
</organismHost>
<organismHost>
    <name type="scientific">Homo sapiens</name>
    <name type="common">Human</name>
    <dbReference type="NCBI Taxonomy" id="9606"/>
</organismHost>
<organismHost>
    <name type="scientific">Sus scrofa</name>
    <name type="common">Pig</name>
    <dbReference type="NCBI Taxonomy" id="9823"/>
</organismHost>
<feature type="chain" id="PRO_0000419424" description="Protein PA-X">
    <location>
        <begin position="1"/>
        <end position="252"/>
    </location>
</feature>
<feature type="active site" evidence="2">
    <location>
        <position position="80"/>
    </location>
</feature>
<feature type="active site" evidence="2">
    <location>
        <position position="108"/>
    </location>
</feature>
<feature type="site" description="Important for efficient shutoff activity" evidence="5">
    <location>
        <position position="28"/>
    </location>
</feature>
<feature type="site" description="Important for efficient shutoff activity" evidence="5">
    <location>
        <position position="65"/>
    </location>
</feature>
<feature type="site" description="Important for efficient shutoff activity and nuclear localization" evidence="4">
    <location>
        <position position="195"/>
    </location>
</feature>
<feature type="site" description="Important for efficient shutoff activity and nuclear localization" evidence="4">
    <location>
        <position position="198"/>
    </location>
</feature>
<feature type="site" description="Important for efficient shutoff activity and nuclear localization" evidence="4">
    <location>
        <position position="199"/>
    </location>
</feature>
<feature type="site" description="Important for efficient shutoff activity" evidence="3">
    <location>
        <position position="202"/>
    </location>
</feature>
<feature type="site" description="Important for efficient shutoff activity" evidence="3">
    <location>
        <position position="203"/>
    </location>
</feature>
<feature type="site" description="Important for efficient shutoff activity" evidence="3">
    <location>
        <position position="206"/>
    </location>
</feature>
<comment type="function">
    <text evidence="1 4">Plays a major role in the shutoff of the host protein expression by cleaving mRNAs probably via an endonuclease activity. This host shutoff allows the virus to escape from the host antiviral response (By similarity). Hijacks host RNA splicing machinery to selectively target host RNAs containing introns for destruction. This may explain the preferential degradation of RNAs that have undergone co- or post-transcriptional processing (By similarity).</text>
</comment>
<comment type="subcellular location">
    <subcellularLocation>
        <location evidence="4">Host cytoplasm</location>
    </subcellularLocation>
    <subcellularLocation>
        <location evidence="4">Host nucleus</location>
    </subcellularLocation>
</comment>
<comment type="alternative products">
    <event type="ribosomal frameshifting"/>
    <isoform>
        <id>P0DJW1-1</id>
        <name>PA-X</name>
        <sequence type="displayed"/>
    </isoform>
    <isoform>
        <id>A4U7B3-1</id>
        <name>PA</name>
        <sequence type="external"/>
    </isoform>
</comment>
<comment type="domain">
    <text evidence="1 4">The probable endonuclease active site in the N-terminus and the basic amino acid cluster in the C-terminus are important for the shutoff activity. The C-terminus acts as a nuclear localization signal (By similarity). The C-terminus is recruited to host protein complexes involved in nuclear Pol II RNA processing (By similarity).</text>
</comment>
<comment type="similarity">
    <text evidence="6">Belongs to the influenza viruses PA-X family.</text>
</comment>
<organism>
    <name type="scientific">Influenza A virus (strain A/USA:Albany/12/1951 H1N1)</name>
    <dbReference type="NCBI Taxonomy" id="425580"/>
    <lineage>
        <taxon>Viruses</taxon>
        <taxon>Riboviria</taxon>
        <taxon>Orthornavirae</taxon>
        <taxon>Negarnaviricota</taxon>
        <taxon>Polyploviricotina</taxon>
        <taxon>Insthoviricetes</taxon>
        <taxon>Articulavirales</taxon>
        <taxon>Orthomyxoviridae</taxon>
        <taxon>Alphainfluenzavirus</taxon>
        <taxon>Alphainfluenzavirus influenzae</taxon>
        <taxon>Influenza A virus</taxon>
    </lineage>
</organism>
<reference key="1">
    <citation type="submission" date="2007-04" db="EMBL/GenBank/DDBJ databases">
        <title>The NIAID influenza genome sequencing project.</title>
        <authorList>
            <person name="Spiro D."/>
            <person name="Sengamalay N."/>
            <person name="Boyne A."/>
            <person name="Bera J."/>
            <person name="Ghedin E."/>
            <person name="Zaborsky J."/>
            <person name="Subbu V."/>
            <person name="Sparenborg J."/>
            <person name="Gallagher T."/>
            <person name="Overton L."/>
            <person name="Althoff R."/>
            <person name="Liu X."/>
            <person name="Sitz J."/>
            <person name="Katzel D."/>
            <person name="Neupane R."/>
            <person name="Shumway M."/>
            <person name="Koo H."/>
            <person name="Griesemer S."/>
            <person name="StGeorge K."/>
            <person name="Bennett R."/>
            <person name="Taylor J."/>
            <person name="Bao Y."/>
            <person name="Bolotov P."/>
            <person name="Dernovoy D."/>
            <person name="Kiryutin B."/>
            <person name="Lipman D.J."/>
            <person name="Tatusova T."/>
        </authorList>
    </citation>
    <scope>NUCLEOTIDE SEQUENCE [GENOMIC RNA]</scope>
</reference>
<reference key="2">
    <citation type="submission" date="2007-04" db="EMBL/GenBank/DDBJ databases">
        <authorList>
            <consortium name="The NIAID Influenza Genome Sequencing Consortium"/>
        </authorList>
    </citation>
    <scope>NUCLEOTIDE SEQUENCE [GENOMIC RNA]</scope>
</reference>
<dbReference type="EMBL" id="CY021826">
    <property type="status" value="NOT_ANNOTATED_CDS"/>
    <property type="molecule type" value="Viral_cRNA"/>
</dbReference>
<dbReference type="SMR" id="P0DJW1"/>
<dbReference type="Proteomes" id="UP000007556">
    <property type="component" value="Genome"/>
</dbReference>
<dbReference type="GO" id="GO:0003723">
    <property type="term" value="F:RNA binding"/>
    <property type="evidence" value="ECO:0007669"/>
    <property type="project" value="InterPro"/>
</dbReference>
<dbReference type="GO" id="GO:0039694">
    <property type="term" value="P:viral RNA genome replication"/>
    <property type="evidence" value="ECO:0007669"/>
    <property type="project" value="InterPro"/>
</dbReference>
<dbReference type="GO" id="GO:0075523">
    <property type="term" value="P:viral translational frameshifting"/>
    <property type="evidence" value="ECO:0007669"/>
    <property type="project" value="UniProtKB-KW"/>
</dbReference>
<dbReference type="FunFam" id="3.40.91.90:FF:000001">
    <property type="entry name" value="Polymerase acidic protein"/>
    <property type="match status" value="1"/>
</dbReference>
<dbReference type="Gene3D" id="3.40.91.90">
    <property type="entry name" value="Influenza RNA-dependent RNA polymerase subunit PA, endonuclease domain"/>
    <property type="match status" value="1"/>
</dbReference>
<dbReference type="InterPro" id="IPR001009">
    <property type="entry name" value="PA/PA-X"/>
</dbReference>
<dbReference type="InterPro" id="IPR038372">
    <property type="entry name" value="PA/PA-X_sf"/>
</dbReference>
<dbReference type="Pfam" id="PF00603">
    <property type="entry name" value="Flu_PA"/>
    <property type="match status" value="1"/>
</dbReference>
<name>PAX_I51A0</name>
<protein>
    <recommendedName>
        <fullName>Protein PA-X</fullName>
    </recommendedName>
</protein>
<evidence type="ECO:0000250" key="1">
    <source>
        <dbReference type="UniProtKB" id="P0CK64"/>
    </source>
</evidence>
<evidence type="ECO:0000250" key="2">
    <source>
        <dbReference type="UniProtKB" id="P0CK68"/>
    </source>
</evidence>
<evidence type="ECO:0000250" key="3">
    <source>
        <dbReference type="UniProtKB" id="P0DJW8"/>
    </source>
</evidence>
<evidence type="ECO:0000250" key="4">
    <source>
        <dbReference type="UniProtKB" id="P0DXO5"/>
    </source>
</evidence>
<evidence type="ECO:0000250" key="5">
    <source>
        <dbReference type="UniProtKB" id="P0DXO6"/>
    </source>
</evidence>
<evidence type="ECO:0000305" key="6"/>
<accession>P0DJW1</accession>